<proteinExistence type="inferred from homology"/>
<sequence length="94" mass="10651">MTKSELIERLATQQSHIPAKTVEDAVKEMLEHMASTLAQGERIEIRGFGSFSLHYRAPRTGRNPKTGDKVELEGKYVPHFKPGKELRDRANIYG</sequence>
<feature type="chain" id="PRO_1000060602" description="Integration host factor subunit beta">
    <location>
        <begin position="1"/>
        <end position="94"/>
    </location>
</feature>
<dbReference type="EMBL" id="CP000243">
    <property type="protein sequence ID" value="ABE06468.1"/>
    <property type="molecule type" value="Genomic_DNA"/>
</dbReference>
<dbReference type="RefSeq" id="WP_000167336.1">
    <property type="nucleotide sequence ID" value="NZ_CP064825.1"/>
</dbReference>
<dbReference type="SMR" id="Q1RDU6"/>
<dbReference type="GeneID" id="93776505"/>
<dbReference type="KEGG" id="eci:UTI89_C0983"/>
<dbReference type="HOGENOM" id="CLU_105066_2_0_6"/>
<dbReference type="Proteomes" id="UP000001952">
    <property type="component" value="Chromosome"/>
</dbReference>
<dbReference type="GO" id="GO:0005694">
    <property type="term" value="C:chromosome"/>
    <property type="evidence" value="ECO:0007669"/>
    <property type="project" value="InterPro"/>
</dbReference>
<dbReference type="GO" id="GO:0005829">
    <property type="term" value="C:cytosol"/>
    <property type="evidence" value="ECO:0007669"/>
    <property type="project" value="TreeGrafter"/>
</dbReference>
<dbReference type="GO" id="GO:0003677">
    <property type="term" value="F:DNA binding"/>
    <property type="evidence" value="ECO:0007669"/>
    <property type="project" value="UniProtKB-UniRule"/>
</dbReference>
<dbReference type="GO" id="GO:0030527">
    <property type="term" value="F:structural constituent of chromatin"/>
    <property type="evidence" value="ECO:0007669"/>
    <property type="project" value="InterPro"/>
</dbReference>
<dbReference type="GO" id="GO:0006310">
    <property type="term" value="P:DNA recombination"/>
    <property type="evidence" value="ECO:0007669"/>
    <property type="project" value="UniProtKB-UniRule"/>
</dbReference>
<dbReference type="GO" id="GO:0006355">
    <property type="term" value="P:regulation of DNA-templated transcription"/>
    <property type="evidence" value="ECO:0007669"/>
    <property type="project" value="UniProtKB-UniRule"/>
</dbReference>
<dbReference type="GO" id="GO:0006417">
    <property type="term" value="P:regulation of translation"/>
    <property type="evidence" value="ECO:0007669"/>
    <property type="project" value="UniProtKB-UniRule"/>
</dbReference>
<dbReference type="CDD" id="cd13836">
    <property type="entry name" value="IHF_B"/>
    <property type="match status" value="1"/>
</dbReference>
<dbReference type="FunFam" id="4.10.520.10:FF:000003">
    <property type="entry name" value="Integration host factor subunit beta"/>
    <property type="match status" value="1"/>
</dbReference>
<dbReference type="Gene3D" id="4.10.520.10">
    <property type="entry name" value="IHF-like DNA-binding proteins"/>
    <property type="match status" value="1"/>
</dbReference>
<dbReference type="HAMAP" id="MF_00381">
    <property type="entry name" value="IHF_beta"/>
    <property type="match status" value="1"/>
</dbReference>
<dbReference type="InterPro" id="IPR000119">
    <property type="entry name" value="Hist_DNA-bd"/>
</dbReference>
<dbReference type="InterPro" id="IPR020816">
    <property type="entry name" value="Histone-like_DNA-bd_CS"/>
</dbReference>
<dbReference type="InterPro" id="IPR010992">
    <property type="entry name" value="IHF-like_DNA-bd_dom_sf"/>
</dbReference>
<dbReference type="InterPro" id="IPR005685">
    <property type="entry name" value="IHF_beta"/>
</dbReference>
<dbReference type="NCBIfam" id="TIGR00988">
    <property type="entry name" value="hip"/>
    <property type="match status" value="1"/>
</dbReference>
<dbReference type="NCBIfam" id="NF001222">
    <property type="entry name" value="PRK00199.1"/>
    <property type="match status" value="1"/>
</dbReference>
<dbReference type="PANTHER" id="PTHR33175">
    <property type="entry name" value="DNA-BINDING PROTEIN HU"/>
    <property type="match status" value="1"/>
</dbReference>
<dbReference type="PANTHER" id="PTHR33175:SF5">
    <property type="entry name" value="INTEGRATION HOST FACTOR SUBUNIT BETA"/>
    <property type="match status" value="1"/>
</dbReference>
<dbReference type="Pfam" id="PF00216">
    <property type="entry name" value="Bac_DNA_binding"/>
    <property type="match status" value="1"/>
</dbReference>
<dbReference type="PRINTS" id="PR01727">
    <property type="entry name" value="DNABINDINGHU"/>
</dbReference>
<dbReference type="SMART" id="SM00411">
    <property type="entry name" value="BHL"/>
    <property type="match status" value="1"/>
</dbReference>
<dbReference type="SUPFAM" id="SSF47729">
    <property type="entry name" value="IHF-like DNA-binding proteins"/>
    <property type="match status" value="1"/>
</dbReference>
<dbReference type="PROSITE" id="PS00045">
    <property type="entry name" value="HISTONE_LIKE"/>
    <property type="match status" value="1"/>
</dbReference>
<protein>
    <recommendedName>
        <fullName evidence="1">Integration host factor subunit beta</fullName>
        <shortName evidence="1">IHF-beta</shortName>
    </recommendedName>
</protein>
<accession>Q1RDU6</accession>
<reference key="1">
    <citation type="journal article" date="2006" name="Proc. Natl. Acad. Sci. U.S.A.">
        <title>Identification of genes subject to positive selection in uropathogenic strains of Escherichia coli: a comparative genomics approach.</title>
        <authorList>
            <person name="Chen S.L."/>
            <person name="Hung C.-S."/>
            <person name="Xu J."/>
            <person name="Reigstad C.S."/>
            <person name="Magrini V."/>
            <person name="Sabo A."/>
            <person name="Blasiar D."/>
            <person name="Bieri T."/>
            <person name="Meyer R.R."/>
            <person name="Ozersky P."/>
            <person name="Armstrong J.R."/>
            <person name="Fulton R.S."/>
            <person name="Latreille J.P."/>
            <person name="Spieth J."/>
            <person name="Hooton T.M."/>
            <person name="Mardis E.R."/>
            <person name="Hultgren S.J."/>
            <person name="Gordon J.I."/>
        </authorList>
    </citation>
    <scope>NUCLEOTIDE SEQUENCE [LARGE SCALE GENOMIC DNA]</scope>
    <source>
        <strain>UTI89 / UPEC</strain>
    </source>
</reference>
<keyword id="KW-0233">DNA recombination</keyword>
<keyword id="KW-0238">DNA-binding</keyword>
<keyword id="KW-0804">Transcription</keyword>
<keyword id="KW-0805">Transcription regulation</keyword>
<keyword id="KW-0810">Translation regulation</keyword>
<gene>
    <name evidence="1" type="primary">ihfB</name>
    <name evidence="1" type="synonym">himD</name>
    <name type="ordered locus">UTI89_C0983</name>
</gene>
<name>IHFB_ECOUT</name>
<organism>
    <name type="scientific">Escherichia coli (strain UTI89 / UPEC)</name>
    <dbReference type="NCBI Taxonomy" id="364106"/>
    <lineage>
        <taxon>Bacteria</taxon>
        <taxon>Pseudomonadati</taxon>
        <taxon>Pseudomonadota</taxon>
        <taxon>Gammaproteobacteria</taxon>
        <taxon>Enterobacterales</taxon>
        <taxon>Enterobacteriaceae</taxon>
        <taxon>Escherichia</taxon>
    </lineage>
</organism>
<comment type="function">
    <text evidence="1">This protein is one of the two subunits of integration host factor, a specific DNA-binding protein that functions in genetic recombination as well as in transcriptional and translational control.</text>
</comment>
<comment type="subunit">
    <text evidence="1">Heterodimer of an alpha and a beta chain.</text>
</comment>
<comment type="similarity">
    <text evidence="1">Belongs to the bacterial histone-like protein family.</text>
</comment>
<evidence type="ECO:0000255" key="1">
    <source>
        <dbReference type="HAMAP-Rule" id="MF_00381"/>
    </source>
</evidence>